<protein>
    <recommendedName>
        <fullName>Temporin-1Ja</fullName>
    </recommendedName>
</protein>
<name>TP1A_RANJA</name>
<sequence>ILPLVGNLLNDLL</sequence>
<dbReference type="GO" id="GO:0005576">
    <property type="term" value="C:extracellular region"/>
    <property type="evidence" value="ECO:0007669"/>
    <property type="project" value="UniProtKB-SubCell"/>
</dbReference>
<dbReference type="GO" id="GO:0016999">
    <property type="term" value="P:antibiotic metabolic process"/>
    <property type="evidence" value="ECO:0000314"/>
    <property type="project" value="UniProtKB"/>
</dbReference>
<dbReference type="GO" id="GO:0050829">
    <property type="term" value="P:defense response to Gram-negative bacterium"/>
    <property type="evidence" value="ECO:0000314"/>
    <property type="project" value="UniProtKB"/>
</dbReference>
<dbReference type="GO" id="GO:0050830">
    <property type="term" value="P:defense response to Gram-positive bacterium"/>
    <property type="evidence" value="ECO:0000314"/>
    <property type="project" value="UniProtKB"/>
</dbReference>
<accession>P83307</accession>
<comment type="function">
    <text evidence="1">Antibacterial activity against the Gram-negative bacterium E.coli and the Gram-positive bacterium S.aureus.</text>
</comment>
<comment type="subcellular location">
    <subcellularLocation>
        <location>Secreted</location>
    </subcellularLocation>
</comment>
<comment type="tissue specificity">
    <text>Expressed by the skin glands.</text>
</comment>
<comment type="mass spectrometry"/>
<comment type="similarity">
    <text evidence="2">Belongs to the frog skin active peptide (FSAP) family. Temporin subfamily.</text>
</comment>
<feature type="peptide" id="PRO_0000043586" description="Temporin-1Ja">
    <location>
        <begin position="1"/>
        <end position="13"/>
    </location>
</feature>
<feature type="modified residue" description="Leucine amide" evidence="1">
    <location>
        <position position="13"/>
    </location>
</feature>
<proteinExistence type="evidence at protein level"/>
<evidence type="ECO:0000269" key="1">
    <source>
    </source>
</evidence>
<evidence type="ECO:0000305" key="2"/>
<organism evidence="2">
    <name type="scientific">Rana japonica</name>
    <name type="common">Japanese reddish frog</name>
    <dbReference type="NCBI Taxonomy" id="8402"/>
    <lineage>
        <taxon>Eukaryota</taxon>
        <taxon>Metazoa</taxon>
        <taxon>Chordata</taxon>
        <taxon>Craniata</taxon>
        <taxon>Vertebrata</taxon>
        <taxon>Euteleostomi</taxon>
        <taxon>Amphibia</taxon>
        <taxon>Batrachia</taxon>
        <taxon>Anura</taxon>
        <taxon>Neobatrachia</taxon>
        <taxon>Ranoidea</taxon>
        <taxon>Ranidae</taxon>
        <taxon>Rana</taxon>
        <taxon>Rana</taxon>
    </lineage>
</organism>
<keyword id="KW-0027">Amidation</keyword>
<keyword id="KW-0878">Amphibian defense peptide</keyword>
<keyword id="KW-0044">Antibiotic</keyword>
<keyword id="KW-0929">Antimicrobial</keyword>
<keyword id="KW-0903">Direct protein sequencing</keyword>
<keyword id="KW-0964">Secreted</keyword>
<reference evidence="2" key="1">
    <citation type="journal article" date="2002" name="Peptides">
        <title>Antimicrobial peptides with atypical structural features from the skin of the Japanese brown frog Rana japonica.</title>
        <authorList>
            <person name="Isaacson T."/>
            <person name="Soto A."/>
            <person name="Iwamuro S."/>
            <person name="Knoop F.C."/>
            <person name="Conlon J.M."/>
        </authorList>
    </citation>
    <scope>PROTEIN SEQUENCE</scope>
    <scope>AMIDATION AT LEU-13</scope>
    <scope>FUNCTION</scope>
    <scope>MASS SPECTROMETRY</scope>
    <source>
        <tissue>Skin secretion</tissue>
    </source>
</reference>